<sequence length="912" mass="101685">MASLIEKLLRTGDKKTLRQLRNYADSINALESSFQTFTDAELREETDRLRERHQDGEKLDDLLPEAFAAVREASSRTLGMRHFDVQLMGGAALHLGNIAEMKTGEGKTLVATAPAYLNALTGNGVHVITVNDYLAEYQSDLMGRVYRFLGLTSGCILSNQDPAVRREQYAADITYGTNNEFGFDYLRDNMAWDKSELVQRGHHFAIVDEVDSILIDEARTPLIISGPAQGDTNRWYSEFAKVVTRLKPDEDYEVDEKKRTVGVLEGGIEKVEDYLGIHNLYESANTPLIGFLNNAIKAKELFKRDKDYVILDGEVLIVDEHTGRILAGRRYNEGMHQAIEAKEGVEIKAENQTLATVTLQNYFRMYNKLSGMTGTAETEAAEFMSTYKLGVVAIPTNRDMQRIDQPDLVYKNEAVKFDAVVKDIAERHEKGQPVLVGTTSVEKSEYLSRLLAKEGIRHEVLNAKNHAREAAIVAQAGRKGAVTVATNMAGRGTDIMLGGNAEFTAVAELAAKGLDPEENSEEYEAAWPAAFEAAKQAVKDEHEEVLELGGLYVLGTERHESRRIDNQLRGRSGRQGDPGESRFYLSLTDDLMRLFNSGAAERLMNSSVPDDVALESKLVSRAIASAQGQVEGRNAEQRKNVLKYDDVLNRQREAIYGDRRRILEGDDLHEKVQFFLEDTITALIDAATSEGTGDDWDFNQLWTNLKTLYPVSVTSHDVIDEAGGKSRITVDFLKEEILSDARLVYQAREQAIGSESMRELERRVVLSVIGRKWQEHLYEMDYLKEGIGLRAMAQRDPLVEYQREGFIMFQAMMEAIREESVGFLFNLEVEVTPAEDVVVADGAGEHTEHHEPQIHAAGLEAPEKPAQLQYTAPGEDGASQTRVEGRSSGRSGNPAKAAQDGARKPAPKKKKR</sequence>
<proteinExistence type="inferred from homology"/>
<name>SECA_ARTS2</name>
<feature type="chain" id="PRO_0000318308" description="Protein translocase subunit SecA">
    <location>
        <begin position="1"/>
        <end position="912"/>
    </location>
</feature>
<feature type="region of interest" description="Disordered" evidence="2">
    <location>
        <begin position="860"/>
        <end position="912"/>
    </location>
</feature>
<feature type="binding site" evidence="1">
    <location>
        <position position="86"/>
    </location>
    <ligand>
        <name>ATP</name>
        <dbReference type="ChEBI" id="CHEBI:30616"/>
    </ligand>
</feature>
<feature type="binding site" evidence="1">
    <location>
        <begin position="104"/>
        <end position="108"/>
    </location>
    <ligand>
        <name>ATP</name>
        <dbReference type="ChEBI" id="CHEBI:30616"/>
    </ligand>
</feature>
<feature type="binding site" evidence="1">
    <location>
        <position position="494"/>
    </location>
    <ligand>
        <name>ATP</name>
        <dbReference type="ChEBI" id="CHEBI:30616"/>
    </ligand>
</feature>
<organism>
    <name type="scientific">Arthrobacter sp. (strain FB24)</name>
    <dbReference type="NCBI Taxonomy" id="290399"/>
    <lineage>
        <taxon>Bacteria</taxon>
        <taxon>Bacillati</taxon>
        <taxon>Actinomycetota</taxon>
        <taxon>Actinomycetes</taxon>
        <taxon>Micrococcales</taxon>
        <taxon>Micrococcaceae</taxon>
        <taxon>Arthrobacter</taxon>
    </lineage>
</organism>
<protein>
    <recommendedName>
        <fullName evidence="1">Protein translocase subunit SecA</fullName>
        <ecNumber evidence="1">7.4.2.8</ecNumber>
    </recommendedName>
</protein>
<accession>A0JYG5</accession>
<comment type="function">
    <text evidence="1">Part of the Sec protein translocase complex. Interacts with the SecYEG preprotein conducting channel. Has a central role in coupling the hydrolysis of ATP to the transfer of proteins into and across the cell membrane, serving as an ATP-driven molecular motor driving the stepwise translocation of polypeptide chains across the membrane.</text>
</comment>
<comment type="catalytic activity">
    <reaction evidence="1">
        <text>ATP + H2O + cellular proteinSide 1 = ADP + phosphate + cellular proteinSide 2.</text>
        <dbReference type="EC" id="7.4.2.8"/>
    </reaction>
</comment>
<comment type="subunit">
    <text evidence="1">Monomer and homodimer. Part of the essential Sec protein translocation apparatus which comprises SecA, SecYEG and auxiliary proteins SecDF. Other proteins may also be involved.</text>
</comment>
<comment type="subcellular location">
    <subcellularLocation>
        <location evidence="1">Cell membrane</location>
        <topology evidence="1">Peripheral membrane protein</topology>
        <orientation evidence="1">Cytoplasmic side</orientation>
    </subcellularLocation>
    <subcellularLocation>
        <location evidence="1">Cytoplasm</location>
    </subcellularLocation>
    <text evidence="1">Distribution is 50-50.</text>
</comment>
<comment type="similarity">
    <text evidence="1">Belongs to the SecA family.</text>
</comment>
<reference key="1">
    <citation type="journal article" date="2013" name="Stand. Genomic Sci.">
        <title>Complete genome sequence of Arthrobacter sp. strain FB24.</title>
        <authorList>
            <person name="Nakatsu C.H."/>
            <person name="Barabote R."/>
            <person name="Thompson S."/>
            <person name="Bruce D."/>
            <person name="Detter C."/>
            <person name="Brettin T."/>
            <person name="Han C."/>
            <person name="Beasley F."/>
            <person name="Chen W."/>
            <person name="Konopka A."/>
            <person name="Xie G."/>
        </authorList>
    </citation>
    <scope>NUCLEOTIDE SEQUENCE [LARGE SCALE GENOMIC DNA]</scope>
    <source>
        <strain>FB24</strain>
    </source>
</reference>
<keyword id="KW-0067">ATP-binding</keyword>
<keyword id="KW-1003">Cell membrane</keyword>
<keyword id="KW-0963">Cytoplasm</keyword>
<keyword id="KW-0472">Membrane</keyword>
<keyword id="KW-0547">Nucleotide-binding</keyword>
<keyword id="KW-0653">Protein transport</keyword>
<keyword id="KW-1185">Reference proteome</keyword>
<keyword id="KW-1278">Translocase</keyword>
<keyword id="KW-0811">Translocation</keyword>
<keyword id="KW-0813">Transport</keyword>
<evidence type="ECO:0000255" key="1">
    <source>
        <dbReference type="HAMAP-Rule" id="MF_01382"/>
    </source>
</evidence>
<evidence type="ECO:0000256" key="2">
    <source>
        <dbReference type="SAM" id="MobiDB-lite"/>
    </source>
</evidence>
<gene>
    <name evidence="1" type="primary">secA</name>
    <name type="ordered locus">Arth_2706</name>
</gene>
<dbReference type="EC" id="7.4.2.8" evidence="1"/>
<dbReference type="EMBL" id="CP000454">
    <property type="protein sequence ID" value="ABK04085.1"/>
    <property type="molecule type" value="Genomic_DNA"/>
</dbReference>
<dbReference type="RefSeq" id="WP_011692546.1">
    <property type="nucleotide sequence ID" value="NC_008541.1"/>
</dbReference>
<dbReference type="SMR" id="A0JYG5"/>
<dbReference type="STRING" id="290399.Arth_2706"/>
<dbReference type="KEGG" id="art:Arth_2706"/>
<dbReference type="eggNOG" id="COG0653">
    <property type="taxonomic scope" value="Bacteria"/>
</dbReference>
<dbReference type="HOGENOM" id="CLU_005314_3_0_11"/>
<dbReference type="OrthoDB" id="9805579at2"/>
<dbReference type="Proteomes" id="UP000000754">
    <property type="component" value="Chromosome"/>
</dbReference>
<dbReference type="GO" id="GO:0031522">
    <property type="term" value="C:cell envelope Sec protein transport complex"/>
    <property type="evidence" value="ECO:0007669"/>
    <property type="project" value="TreeGrafter"/>
</dbReference>
<dbReference type="GO" id="GO:0005829">
    <property type="term" value="C:cytosol"/>
    <property type="evidence" value="ECO:0007669"/>
    <property type="project" value="TreeGrafter"/>
</dbReference>
<dbReference type="GO" id="GO:0005886">
    <property type="term" value="C:plasma membrane"/>
    <property type="evidence" value="ECO:0007669"/>
    <property type="project" value="UniProtKB-SubCell"/>
</dbReference>
<dbReference type="GO" id="GO:0005524">
    <property type="term" value="F:ATP binding"/>
    <property type="evidence" value="ECO:0007669"/>
    <property type="project" value="UniProtKB-UniRule"/>
</dbReference>
<dbReference type="GO" id="GO:0008564">
    <property type="term" value="F:protein-exporting ATPase activity"/>
    <property type="evidence" value="ECO:0007669"/>
    <property type="project" value="UniProtKB-EC"/>
</dbReference>
<dbReference type="GO" id="GO:0065002">
    <property type="term" value="P:intracellular protein transmembrane transport"/>
    <property type="evidence" value="ECO:0007669"/>
    <property type="project" value="UniProtKB-UniRule"/>
</dbReference>
<dbReference type="GO" id="GO:0017038">
    <property type="term" value="P:protein import"/>
    <property type="evidence" value="ECO:0007669"/>
    <property type="project" value="InterPro"/>
</dbReference>
<dbReference type="GO" id="GO:0006605">
    <property type="term" value="P:protein targeting"/>
    <property type="evidence" value="ECO:0007669"/>
    <property type="project" value="UniProtKB-UniRule"/>
</dbReference>
<dbReference type="GO" id="GO:0043952">
    <property type="term" value="P:protein transport by the Sec complex"/>
    <property type="evidence" value="ECO:0007669"/>
    <property type="project" value="TreeGrafter"/>
</dbReference>
<dbReference type="CDD" id="cd17928">
    <property type="entry name" value="DEXDc_SecA"/>
    <property type="match status" value="1"/>
</dbReference>
<dbReference type="CDD" id="cd18803">
    <property type="entry name" value="SF2_C_secA"/>
    <property type="match status" value="1"/>
</dbReference>
<dbReference type="FunFam" id="1.10.3060.10:FF:000002">
    <property type="entry name" value="Preprotein translocase subunit SecA"/>
    <property type="match status" value="1"/>
</dbReference>
<dbReference type="FunFam" id="3.40.50.300:FF:000113">
    <property type="entry name" value="Preprotein translocase subunit SecA"/>
    <property type="match status" value="1"/>
</dbReference>
<dbReference type="FunFam" id="3.40.50.300:FF:000334">
    <property type="entry name" value="Protein translocase subunit SecA"/>
    <property type="match status" value="1"/>
</dbReference>
<dbReference type="FunFam" id="3.90.1440.10:FF:000002">
    <property type="entry name" value="Protein translocase subunit SecA"/>
    <property type="match status" value="1"/>
</dbReference>
<dbReference type="Gene3D" id="1.10.3060.10">
    <property type="entry name" value="Helical scaffold and wing domains of SecA"/>
    <property type="match status" value="1"/>
</dbReference>
<dbReference type="Gene3D" id="3.40.50.300">
    <property type="entry name" value="P-loop containing nucleotide triphosphate hydrolases"/>
    <property type="match status" value="2"/>
</dbReference>
<dbReference type="Gene3D" id="3.90.1440.10">
    <property type="entry name" value="SecA, preprotein cross-linking domain"/>
    <property type="match status" value="1"/>
</dbReference>
<dbReference type="HAMAP" id="MF_01382">
    <property type="entry name" value="SecA"/>
    <property type="match status" value="1"/>
</dbReference>
<dbReference type="InterPro" id="IPR014001">
    <property type="entry name" value="Helicase_ATP-bd"/>
</dbReference>
<dbReference type="InterPro" id="IPR001650">
    <property type="entry name" value="Helicase_C-like"/>
</dbReference>
<dbReference type="InterPro" id="IPR027417">
    <property type="entry name" value="P-loop_NTPase"/>
</dbReference>
<dbReference type="InterPro" id="IPR000185">
    <property type="entry name" value="SecA"/>
</dbReference>
<dbReference type="InterPro" id="IPR020937">
    <property type="entry name" value="SecA_CS"/>
</dbReference>
<dbReference type="InterPro" id="IPR011115">
    <property type="entry name" value="SecA_DEAD"/>
</dbReference>
<dbReference type="InterPro" id="IPR014018">
    <property type="entry name" value="SecA_motor_DEAD"/>
</dbReference>
<dbReference type="InterPro" id="IPR011130">
    <property type="entry name" value="SecA_preprotein_X-link_dom"/>
</dbReference>
<dbReference type="InterPro" id="IPR044722">
    <property type="entry name" value="SecA_SF2_C"/>
</dbReference>
<dbReference type="InterPro" id="IPR011116">
    <property type="entry name" value="SecA_Wing/Scaffold"/>
</dbReference>
<dbReference type="InterPro" id="IPR036266">
    <property type="entry name" value="SecA_Wing/Scaffold_sf"/>
</dbReference>
<dbReference type="InterPro" id="IPR036670">
    <property type="entry name" value="SecA_X-link_sf"/>
</dbReference>
<dbReference type="NCBIfam" id="NF009538">
    <property type="entry name" value="PRK12904.1"/>
    <property type="match status" value="1"/>
</dbReference>
<dbReference type="NCBIfam" id="TIGR00963">
    <property type="entry name" value="secA"/>
    <property type="match status" value="1"/>
</dbReference>
<dbReference type="PANTHER" id="PTHR30612:SF0">
    <property type="entry name" value="CHLOROPLAST PROTEIN-TRANSPORTING ATPASE"/>
    <property type="match status" value="1"/>
</dbReference>
<dbReference type="PANTHER" id="PTHR30612">
    <property type="entry name" value="SECA INNER MEMBRANE COMPONENT OF SEC PROTEIN SECRETION SYSTEM"/>
    <property type="match status" value="1"/>
</dbReference>
<dbReference type="Pfam" id="PF21090">
    <property type="entry name" value="P-loop_SecA"/>
    <property type="match status" value="1"/>
</dbReference>
<dbReference type="Pfam" id="PF07517">
    <property type="entry name" value="SecA_DEAD"/>
    <property type="match status" value="1"/>
</dbReference>
<dbReference type="Pfam" id="PF01043">
    <property type="entry name" value="SecA_PP_bind"/>
    <property type="match status" value="1"/>
</dbReference>
<dbReference type="Pfam" id="PF07516">
    <property type="entry name" value="SecA_SW"/>
    <property type="match status" value="1"/>
</dbReference>
<dbReference type="PRINTS" id="PR00906">
    <property type="entry name" value="SECA"/>
</dbReference>
<dbReference type="SMART" id="SM00957">
    <property type="entry name" value="SecA_DEAD"/>
    <property type="match status" value="1"/>
</dbReference>
<dbReference type="SMART" id="SM00958">
    <property type="entry name" value="SecA_PP_bind"/>
    <property type="match status" value="1"/>
</dbReference>
<dbReference type="SUPFAM" id="SSF81886">
    <property type="entry name" value="Helical scaffold and wing domains of SecA"/>
    <property type="match status" value="1"/>
</dbReference>
<dbReference type="SUPFAM" id="SSF52540">
    <property type="entry name" value="P-loop containing nucleoside triphosphate hydrolases"/>
    <property type="match status" value="2"/>
</dbReference>
<dbReference type="SUPFAM" id="SSF81767">
    <property type="entry name" value="Pre-protein crosslinking domain of SecA"/>
    <property type="match status" value="1"/>
</dbReference>
<dbReference type="PROSITE" id="PS01312">
    <property type="entry name" value="SECA"/>
    <property type="match status" value="1"/>
</dbReference>
<dbReference type="PROSITE" id="PS51196">
    <property type="entry name" value="SECA_MOTOR_DEAD"/>
    <property type="match status" value="1"/>
</dbReference>